<proteinExistence type="inferred from homology"/>
<accession>B4TTF6</accession>
<reference key="1">
    <citation type="journal article" date="2011" name="J. Bacteriol.">
        <title>Comparative genomics of 28 Salmonella enterica isolates: evidence for CRISPR-mediated adaptive sublineage evolution.</title>
        <authorList>
            <person name="Fricke W.F."/>
            <person name="Mammel M.K."/>
            <person name="McDermott P.F."/>
            <person name="Tartera C."/>
            <person name="White D.G."/>
            <person name="Leclerc J.E."/>
            <person name="Ravel J."/>
            <person name="Cebula T.A."/>
        </authorList>
    </citation>
    <scope>NUCLEOTIDE SEQUENCE [LARGE SCALE GENOMIC DNA]</scope>
    <source>
        <strain>CVM19633</strain>
    </source>
</reference>
<comment type="function">
    <text evidence="1">Catalyzes the reversible formation of acyl-phosphate (acyl-PO(4)) from acyl-[acyl-carrier-protein] (acyl-ACP). This enzyme utilizes acyl-ACP as fatty acyl donor, but not acyl-CoA.</text>
</comment>
<comment type="catalytic activity">
    <reaction evidence="1">
        <text>a fatty acyl-[ACP] + phosphate = an acyl phosphate + holo-[ACP]</text>
        <dbReference type="Rhea" id="RHEA:42292"/>
        <dbReference type="Rhea" id="RHEA-COMP:9685"/>
        <dbReference type="Rhea" id="RHEA-COMP:14125"/>
        <dbReference type="ChEBI" id="CHEBI:43474"/>
        <dbReference type="ChEBI" id="CHEBI:59918"/>
        <dbReference type="ChEBI" id="CHEBI:64479"/>
        <dbReference type="ChEBI" id="CHEBI:138651"/>
        <dbReference type="EC" id="2.3.1.274"/>
    </reaction>
</comment>
<comment type="pathway">
    <text evidence="1">Lipid metabolism; phospholipid metabolism.</text>
</comment>
<comment type="subunit">
    <text evidence="1">Homodimer. Probably interacts with PlsY.</text>
</comment>
<comment type="subcellular location">
    <subcellularLocation>
        <location evidence="1">Cytoplasm</location>
    </subcellularLocation>
    <text evidence="1">Associated with the membrane possibly through PlsY.</text>
</comment>
<comment type="similarity">
    <text evidence="1">Belongs to the PlsX family.</text>
</comment>
<keyword id="KW-0963">Cytoplasm</keyword>
<keyword id="KW-0444">Lipid biosynthesis</keyword>
<keyword id="KW-0443">Lipid metabolism</keyword>
<keyword id="KW-0594">Phospholipid biosynthesis</keyword>
<keyword id="KW-1208">Phospholipid metabolism</keyword>
<keyword id="KW-0808">Transferase</keyword>
<feature type="chain" id="PRO_1000089937" description="Phosphate acyltransferase">
    <location>
        <begin position="1"/>
        <end position="359"/>
    </location>
</feature>
<dbReference type="EC" id="2.3.1.274" evidence="1"/>
<dbReference type="EMBL" id="CP001127">
    <property type="protein sequence ID" value="ACF91384.1"/>
    <property type="molecule type" value="Genomic_DNA"/>
</dbReference>
<dbReference type="RefSeq" id="WP_001518286.1">
    <property type="nucleotide sequence ID" value="NC_011094.1"/>
</dbReference>
<dbReference type="SMR" id="B4TTF6"/>
<dbReference type="KEGG" id="sew:SeSA_A1261"/>
<dbReference type="HOGENOM" id="CLU_039379_1_0_6"/>
<dbReference type="UniPathway" id="UPA00085"/>
<dbReference type="Proteomes" id="UP000001865">
    <property type="component" value="Chromosome"/>
</dbReference>
<dbReference type="GO" id="GO:0005737">
    <property type="term" value="C:cytoplasm"/>
    <property type="evidence" value="ECO:0007669"/>
    <property type="project" value="UniProtKB-SubCell"/>
</dbReference>
<dbReference type="GO" id="GO:0043811">
    <property type="term" value="F:phosphate:acyl-[acyl carrier protein] acyltransferase activity"/>
    <property type="evidence" value="ECO:0007669"/>
    <property type="project" value="UniProtKB-UniRule"/>
</dbReference>
<dbReference type="GO" id="GO:0006633">
    <property type="term" value="P:fatty acid biosynthetic process"/>
    <property type="evidence" value="ECO:0007669"/>
    <property type="project" value="UniProtKB-UniRule"/>
</dbReference>
<dbReference type="GO" id="GO:0008654">
    <property type="term" value="P:phospholipid biosynthetic process"/>
    <property type="evidence" value="ECO:0007669"/>
    <property type="project" value="UniProtKB-KW"/>
</dbReference>
<dbReference type="FunFam" id="3.40.718.10:FF:000008">
    <property type="entry name" value="Phosphate acyltransferase"/>
    <property type="match status" value="1"/>
</dbReference>
<dbReference type="Gene3D" id="3.40.718.10">
    <property type="entry name" value="Isopropylmalate Dehydrogenase"/>
    <property type="match status" value="1"/>
</dbReference>
<dbReference type="HAMAP" id="MF_00019">
    <property type="entry name" value="PlsX"/>
    <property type="match status" value="1"/>
</dbReference>
<dbReference type="InterPro" id="IPR003664">
    <property type="entry name" value="FA_synthesis"/>
</dbReference>
<dbReference type="InterPro" id="IPR012281">
    <property type="entry name" value="Phospholipid_synth_PlsX-like"/>
</dbReference>
<dbReference type="NCBIfam" id="TIGR00182">
    <property type="entry name" value="plsX"/>
    <property type="match status" value="1"/>
</dbReference>
<dbReference type="PANTHER" id="PTHR30100">
    <property type="entry name" value="FATTY ACID/PHOSPHOLIPID SYNTHESIS PROTEIN PLSX"/>
    <property type="match status" value="1"/>
</dbReference>
<dbReference type="PANTHER" id="PTHR30100:SF1">
    <property type="entry name" value="PHOSPHATE ACYLTRANSFERASE"/>
    <property type="match status" value="1"/>
</dbReference>
<dbReference type="Pfam" id="PF02504">
    <property type="entry name" value="FA_synthesis"/>
    <property type="match status" value="1"/>
</dbReference>
<dbReference type="PIRSF" id="PIRSF002465">
    <property type="entry name" value="Phsphlp_syn_PlsX"/>
    <property type="match status" value="1"/>
</dbReference>
<dbReference type="SUPFAM" id="SSF53659">
    <property type="entry name" value="Isocitrate/Isopropylmalate dehydrogenase-like"/>
    <property type="match status" value="1"/>
</dbReference>
<name>PLSX_SALSV</name>
<evidence type="ECO:0000255" key="1">
    <source>
        <dbReference type="HAMAP-Rule" id="MF_00019"/>
    </source>
</evidence>
<gene>
    <name evidence="1" type="primary">plsX</name>
    <name type="ordered locus">SeSA_A1261</name>
</gene>
<protein>
    <recommendedName>
        <fullName evidence="1">Phosphate acyltransferase</fullName>
        <ecNumber evidence="1">2.3.1.274</ecNumber>
    </recommendedName>
    <alternativeName>
        <fullName evidence="1">Acyl-ACP phosphotransacylase</fullName>
    </alternativeName>
    <alternativeName>
        <fullName evidence="1">Acyl-[acyl-carrier-protein]--phosphate acyltransferase</fullName>
    </alternativeName>
    <alternativeName>
        <fullName evidence="1">Phosphate-acyl-ACP acyltransferase</fullName>
    </alternativeName>
</protein>
<organism>
    <name type="scientific">Salmonella schwarzengrund (strain CVM19633)</name>
    <dbReference type="NCBI Taxonomy" id="439843"/>
    <lineage>
        <taxon>Bacteria</taxon>
        <taxon>Pseudomonadati</taxon>
        <taxon>Pseudomonadota</taxon>
        <taxon>Gammaproteobacteria</taxon>
        <taxon>Enterobacterales</taxon>
        <taxon>Enterobacteriaceae</taxon>
        <taxon>Salmonella</taxon>
    </lineage>
</organism>
<sequence length="359" mass="38716">MTRLTLALDVMGGDFGPSVTVPAALQALNANSQLTLLLVGNPDIITPLLAKADFEQRSRLQIIPAQSVIASDARPSQAIRASRGTSMRVALELVKEGRAEACVSAGNTGALMGLAKLLLKPLEGIERPALVTVLPHQQKGKTVVLDLGANVDCDSTMLVQFAVMGAVLAEEVVGIKNPRVALLNIGEEETKGLDSIREASLMLKTVPTINYIGYLEANELLTGKTDVLVCDGFTGNVTLKTMEGVVRMFLSLLKSQGEGKKRSWWLLLLKRWLQKSLTRRFSHLNPDQYNGACLLGLRGTVIKSHGAANQRAFAVAIEQAVQAVQRQVPQRIAARLESVYPAGFEPLDDGKGVNLRAHR</sequence>